<feature type="chain" id="PRO_0000387485" description="17.8 kDa class I heat shock protein">
    <location>
        <begin position="1"/>
        <end position="157"/>
    </location>
</feature>
<feature type="domain" description="sHSP" evidence="1">
    <location>
        <begin position="41"/>
        <end position="156"/>
    </location>
</feature>
<reference key="1">
    <citation type="journal article" date="2000" name="Nature">
        <title>Sequence and analysis of chromosome 1 of the plant Arabidopsis thaliana.</title>
        <authorList>
            <person name="Theologis A."/>
            <person name="Ecker J.R."/>
            <person name="Palm C.J."/>
            <person name="Federspiel N.A."/>
            <person name="Kaul S."/>
            <person name="White O."/>
            <person name="Alonso J."/>
            <person name="Altafi H."/>
            <person name="Araujo R."/>
            <person name="Bowman C.L."/>
            <person name="Brooks S.Y."/>
            <person name="Buehler E."/>
            <person name="Chan A."/>
            <person name="Chao Q."/>
            <person name="Chen H."/>
            <person name="Cheuk R.F."/>
            <person name="Chin C.W."/>
            <person name="Chung M.K."/>
            <person name="Conn L."/>
            <person name="Conway A.B."/>
            <person name="Conway A.R."/>
            <person name="Creasy T.H."/>
            <person name="Dewar K."/>
            <person name="Dunn P."/>
            <person name="Etgu P."/>
            <person name="Feldblyum T.V."/>
            <person name="Feng J.-D."/>
            <person name="Fong B."/>
            <person name="Fujii C.Y."/>
            <person name="Gill J.E."/>
            <person name="Goldsmith A.D."/>
            <person name="Haas B."/>
            <person name="Hansen N.F."/>
            <person name="Hughes B."/>
            <person name="Huizar L."/>
            <person name="Hunter J.L."/>
            <person name="Jenkins J."/>
            <person name="Johnson-Hopson C."/>
            <person name="Khan S."/>
            <person name="Khaykin E."/>
            <person name="Kim C.J."/>
            <person name="Koo H.L."/>
            <person name="Kremenetskaia I."/>
            <person name="Kurtz D.B."/>
            <person name="Kwan A."/>
            <person name="Lam B."/>
            <person name="Langin-Hooper S."/>
            <person name="Lee A."/>
            <person name="Lee J.M."/>
            <person name="Lenz C.A."/>
            <person name="Li J.H."/>
            <person name="Li Y.-P."/>
            <person name="Lin X."/>
            <person name="Liu S.X."/>
            <person name="Liu Z.A."/>
            <person name="Luros J.S."/>
            <person name="Maiti R."/>
            <person name="Marziali A."/>
            <person name="Militscher J."/>
            <person name="Miranda M."/>
            <person name="Nguyen M."/>
            <person name="Nierman W.C."/>
            <person name="Osborne B.I."/>
            <person name="Pai G."/>
            <person name="Peterson J."/>
            <person name="Pham P.K."/>
            <person name="Rizzo M."/>
            <person name="Rooney T."/>
            <person name="Rowley D."/>
            <person name="Sakano H."/>
            <person name="Salzberg S.L."/>
            <person name="Schwartz J.R."/>
            <person name="Shinn P."/>
            <person name="Southwick A.M."/>
            <person name="Sun H."/>
            <person name="Tallon L.J."/>
            <person name="Tambunga G."/>
            <person name="Toriumi M.J."/>
            <person name="Town C.D."/>
            <person name="Utterback T."/>
            <person name="Van Aken S."/>
            <person name="Vaysberg M."/>
            <person name="Vysotskaia V.S."/>
            <person name="Walker M."/>
            <person name="Wu D."/>
            <person name="Yu G."/>
            <person name="Fraser C.M."/>
            <person name="Venter J.C."/>
            <person name="Davis R.W."/>
        </authorList>
    </citation>
    <scope>NUCLEOTIDE SEQUENCE [LARGE SCALE GENOMIC DNA]</scope>
    <source>
        <strain>cv. Columbia</strain>
    </source>
</reference>
<reference key="2">
    <citation type="journal article" date="2017" name="Plant J.">
        <title>Araport11: a complete reannotation of the Arabidopsis thaliana reference genome.</title>
        <authorList>
            <person name="Cheng C.Y."/>
            <person name="Krishnakumar V."/>
            <person name="Chan A.P."/>
            <person name="Thibaud-Nissen F."/>
            <person name="Schobel S."/>
            <person name="Town C.D."/>
        </authorList>
    </citation>
    <scope>GENOME REANNOTATION</scope>
    <source>
        <strain>cv. Columbia</strain>
    </source>
</reference>
<reference key="3">
    <citation type="journal article" date="2002" name="Science">
        <title>Functional annotation of a full-length Arabidopsis cDNA collection.</title>
        <authorList>
            <person name="Seki M."/>
            <person name="Narusaka M."/>
            <person name="Kamiya A."/>
            <person name="Ishida J."/>
            <person name="Satou M."/>
            <person name="Sakurai T."/>
            <person name="Nakajima M."/>
            <person name="Enju A."/>
            <person name="Akiyama K."/>
            <person name="Oono Y."/>
            <person name="Muramatsu M."/>
            <person name="Hayashizaki Y."/>
            <person name="Kawai J."/>
            <person name="Carninci P."/>
            <person name="Itoh M."/>
            <person name="Ishii Y."/>
            <person name="Arakawa T."/>
            <person name="Shibata K."/>
            <person name="Shinagawa A."/>
            <person name="Shinozaki K."/>
        </authorList>
    </citation>
    <scope>NUCLEOTIDE SEQUENCE [LARGE SCALE MRNA]</scope>
    <source>
        <strain>cv. Columbia</strain>
    </source>
</reference>
<reference key="4">
    <citation type="journal article" date="2003" name="Science">
        <title>Empirical analysis of transcriptional activity in the Arabidopsis genome.</title>
        <authorList>
            <person name="Yamada K."/>
            <person name="Lim J."/>
            <person name="Dale J.M."/>
            <person name="Chen H."/>
            <person name="Shinn P."/>
            <person name="Palm C.J."/>
            <person name="Southwick A.M."/>
            <person name="Wu H.C."/>
            <person name="Kim C.J."/>
            <person name="Nguyen M."/>
            <person name="Pham P.K."/>
            <person name="Cheuk R.F."/>
            <person name="Karlin-Newmann G."/>
            <person name="Liu S.X."/>
            <person name="Lam B."/>
            <person name="Sakano H."/>
            <person name="Wu T."/>
            <person name="Yu G."/>
            <person name="Miranda M."/>
            <person name="Quach H.L."/>
            <person name="Tripp M."/>
            <person name="Chang C.H."/>
            <person name="Lee J.M."/>
            <person name="Toriumi M.J."/>
            <person name="Chan M.M."/>
            <person name="Tang C.C."/>
            <person name="Onodera C.S."/>
            <person name="Deng J.M."/>
            <person name="Akiyama K."/>
            <person name="Ansari Y."/>
            <person name="Arakawa T."/>
            <person name="Banh J."/>
            <person name="Banno F."/>
            <person name="Bowser L."/>
            <person name="Brooks S.Y."/>
            <person name="Carninci P."/>
            <person name="Chao Q."/>
            <person name="Choy N."/>
            <person name="Enju A."/>
            <person name="Goldsmith A.D."/>
            <person name="Gurjal M."/>
            <person name="Hansen N.F."/>
            <person name="Hayashizaki Y."/>
            <person name="Johnson-Hopson C."/>
            <person name="Hsuan V.W."/>
            <person name="Iida K."/>
            <person name="Karnes M."/>
            <person name="Khan S."/>
            <person name="Koesema E."/>
            <person name="Ishida J."/>
            <person name="Jiang P.X."/>
            <person name="Jones T."/>
            <person name="Kawai J."/>
            <person name="Kamiya A."/>
            <person name="Meyers C."/>
            <person name="Nakajima M."/>
            <person name="Narusaka M."/>
            <person name="Seki M."/>
            <person name="Sakurai T."/>
            <person name="Satou M."/>
            <person name="Tamse R."/>
            <person name="Vaysberg M."/>
            <person name="Wallender E.K."/>
            <person name="Wong C."/>
            <person name="Yamamura Y."/>
            <person name="Yuan S."/>
            <person name="Shinozaki K."/>
            <person name="Davis R.W."/>
            <person name="Theologis A."/>
            <person name="Ecker J.R."/>
        </authorList>
    </citation>
    <scope>NUCLEOTIDE SEQUENCE [LARGE SCALE MRNA]</scope>
    <source>
        <strain>cv. Columbia</strain>
    </source>
</reference>
<reference key="5">
    <citation type="submission" date="2002-03" db="EMBL/GenBank/DDBJ databases">
        <title>Full-length cDNA from Arabidopsis thaliana.</title>
        <authorList>
            <person name="Brover V.V."/>
            <person name="Troukhan M.E."/>
            <person name="Alexandrov N.A."/>
            <person name="Lu Y.-P."/>
            <person name="Flavell R.B."/>
            <person name="Feldmann K.A."/>
        </authorList>
    </citation>
    <scope>NUCLEOTIDE SEQUENCE [LARGE SCALE MRNA]</scope>
</reference>
<reference key="6">
    <citation type="journal article" date="2011" name="Plant Physiol.">
        <title>Small heat shock protein Hsp17.8 functions as an AKR2A cofactor in the targeting of chloroplast outer membrane proteins in Arabidopsis.</title>
        <authorList>
            <person name="Kim D.H."/>
            <person name="Xu Z.-Y."/>
            <person name="Na Y.J."/>
            <person name="Yoo Y.-J."/>
            <person name="Lee J."/>
            <person name="Sohn E.-J."/>
            <person name="Hwang I."/>
        </authorList>
    </citation>
    <scope>FUNCTION</scope>
    <scope>DISRUPTION PHENOTYPE</scope>
    <scope>INTERACTION WITH AKR2A</scope>
    <scope>INDUCTION BY HEAT SHOCK</scope>
    <scope>TISSUE SPECIFICITY</scope>
    <source>
        <strain>cv. Columbia</strain>
    </source>
</reference>
<accession>Q9LNW0</accession>
<proteinExistence type="evidence at protein level"/>
<organism>
    <name type="scientific">Arabidopsis thaliana</name>
    <name type="common">Mouse-ear cress</name>
    <dbReference type="NCBI Taxonomy" id="3702"/>
    <lineage>
        <taxon>Eukaryota</taxon>
        <taxon>Viridiplantae</taxon>
        <taxon>Streptophyta</taxon>
        <taxon>Embryophyta</taxon>
        <taxon>Tracheophyta</taxon>
        <taxon>Spermatophyta</taxon>
        <taxon>Magnoliopsida</taxon>
        <taxon>eudicotyledons</taxon>
        <taxon>Gunneridae</taxon>
        <taxon>Pentapetalae</taxon>
        <taxon>rosids</taxon>
        <taxon>malvids</taxon>
        <taxon>Brassicales</taxon>
        <taxon>Brassicaceae</taxon>
        <taxon>Camelineae</taxon>
        <taxon>Arabidopsis</taxon>
    </lineage>
</organism>
<dbReference type="EMBL" id="AC022464">
    <property type="protein sequence ID" value="AAF79569.1"/>
    <property type="molecule type" value="Genomic_DNA"/>
</dbReference>
<dbReference type="EMBL" id="CP002684">
    <property type="protein sequence ID" value="AEE28120.1"/>
    <property type="molecule type" value="Genomic_DNA"/>
</dbReference>
<dbReference type="EMBL" id="AK118848">
    <property type="protein sequence ID" value="BAC43437.1"/>
    <property type="molecule type" value="mRNA"/>
</dbReference>
<dbReference type="EMBL" id="BT005424">
    <property type="protein sequence ID" value="AAO63844.1"/>
    <property type="molecule type" value="mRNA"/>
</dbReference>
<dbReference type="EMBL" id="AY086856">
    <property type="protein sequence ID" value="AAM63903.1"/>
    <property type="molecule type" value="mRNA"/>
</dbReference>
<dbReference type="RefSeq" id="NP_172220.1">
    <property type="nucleotide sequence ID" value="NM_100614.3"/>
</dbReference>
<dbReference type="SMR" id="Q9LNW0"/>
<dbReference type="BioGRID" id="22493">
    <property type="interactions" value="10"/>
</dbReference>
<dbReference type="FunCoup" id="Q9LNW0">
    <property type="interactions" value="193"/>
</dbReference>
<dbReference type="IntAct" id="Q9LNW0">
    <property type="interactions" value="10"/>
</dbReference>
<dbReference type="MINT" id="Q9LNW0"/>
<dbReference type="STRING" id="3702.Q9LNW0"/>
<dbReference type="PaxDb" id="3702-AT1G07400.1"/>
<dbReference type="ProteomicsDB" id="230270"/>
<dbReference type="EnsemblPlants" id="AT1G07400.1">
    <property type="protein sequence ID" value="AT1G07400.1"/>
    <property type="gene ID" value="AT1G07400"/>
</dbReference>
<dbReference type="GeneID" id="837252"/>
<dbReference type="Gramene" id="AT1G07400.1">
    <property type="protein sequence ID" value="AT1G07400.1"/>
    <property type="gene ID" value="AT1G07400"/>
</dbReference>
<dbReference type="KEGG" id="ath:AT1G07400"/>
<dbReference type="Araport" id="AT1G07400"/>
<dbReference type="TAIR" id="AT1G07400">
    <property type="gene designation" value="HSP17.8"/>
</dbReference>
<dbReference type="eggNOG" id="KOG0710">
    <property type="taxonomic scope" value="Eukaryota"/>
</dbReference>
<dbReference type="HOGENOM" id="CLU_046737_5_0_1"/>
<dbReference type="InParanoid" id="Q9LNW0"/>
<dbReference type="OMA" id="FFHDPFA"/>
<dbReference type="PhylomeDB" id="Q9LNW0"/>
<dbReference type="PRO" id="PR:Q9LNW0"/>
<dbReference type="Proteomes" id="UP000006548">
    <property type="component" value="Chromosome 1"/>
</dbReference>
<dbReference type="ExpressionAtlas" id="Q9LNW0">
    <property type="expression patterns" value="baseline and differential"/>
</dbReference>
<dbReference type="GO" id="GO:0005737">
    <property type="term" value="C:cytoplasm"/>
    <property type="evidence" value="ECO:0000314"/>
    <property type="project" value="TAIR"/>
</dbReference>
<dbReference type="GO" id="GO:0071456">
    <property type="term" value="P:cellular response to hypoxia"/>
    <property type="evidence" value="ECO:0007007"/>
    <property type="project" value="TAIR"/>
</dbReference>
<dbReference type="GO" id="GO:0009408">
    <property type="term" value="P:response to heat"/>
    <property type="evidence" value="ECO:0000270"/>
    <property type="project" value="UniProtKB"/>
</dbReference>
<dbReference type="GO" id="GO:0006979">
    <property type="term" value="P:response to oxidative stress"/>
    <property type="evidence" value="ECO:0000270"/>
    <property type="project" value="TAIR"/>
</dbReference>
<dbReference type="CDD" id="cd06472">
    <property type="entry name" value="ACD_ScHsp26_like"/>
    <property type="match status" value="1"/>
</dbReference>
<dbReference type="FunFam" id="2.60.40.790:FF:000009">
    <property type="entry name" value="17.6 kDa class I heat shock protein-like"/>
    <property type="match status" value="1"/>
</dbReference>
<dbReference type="Gene3D" id="2.60.40.790">
    <property type="match status" value="1"/>
</dbReference>
<dbReference type="InterPro" id="IPR002068">
    <property type="entry name" value="A-crystallin/Hsp20_dom"/>
</dbReference>
<dbReference type="InterPro" id="IPR007052">
    <property type="entry name" value="CS_dom"/>
</dbReference>
<dbReference type="InterPro" id="IPR008978">
    <property type="entry name" value="HSP20-like_chaperone"/>
</dbReference>
<dbReference type="InterPro" id="IPR031107">
    <property type="entry name" value="Small_HSP"/>
</dbReference>
<dbReference type="PANTHER" id="PTHR11527">
    <property type="entry name" value="HEAT-SHOCK PROTEIN 20 FAMILY MEMBER"/>
    <property type="match status" value="1"/>
</dbReference>
<dbReference type="Pfam" id="PF00011">
    <property type="entry name" value="HSP20"/>
    <property type="match status" value="1"/>
</dbReference>
<dbReference type="SUPFAM" id="SSF49764">
    <property type="entry name" value="HSP20-like chaperones"/>
    <property type="match status" value="1"/>
</dbReference>
<dbReference type="PROSITE" id="PS01031">
    <property type="entry name" value="SHSP"/>
    <property type="match status" value="1"/>
</dbReference>
<keyword id="KW-0963">Cytoplasm</keyword>
<keyword id="KW-1185">Reference proteome</keyword>
<keyword id="KW-0346">Stress response</keyword>
<sequence>MSLIPSFFGNNRRSNSIFDPFSLDVWDPFKELQFPSSLSGETSAITNARVDWKETAEAHVFKADLPGMKKEEVKVEIEDDSVLKISGERHVEKEEKQDTWHRVERSSGQFSRKFKLPENVKMDQVKASMENGVLTVTVPKVEEAKKKAQVKSIDISG</sequence>
<protein>
    <recommendedName>
        <fullName>17.8 kDa class I heat shock protein</fullName>
    </recommendedName>
    <alternativeName>
        <fullName>17.8 kDa heat shock protein</fullName>
        <shortName>AtHsp17.8</shortName>
    </alternativeName>
</protein>
<comment type="function">
    <text evidence="2">Cytosolic mediator for sorting and targeting of nascent chloroplast outer envelope membrane (OEM) proteins to the chloroplast. Functions as an AKR2A cofactor to facilitate the targeting of OEP7 to chloroplasts.</text>
</comment>
<comment type="subunit">
    <text evidence="2">Homodimer under normal physiological conditions. Aggregates in high oligomeric complexes after heat shock. Binds to AKR2A and to chloroplasts.</text>
</comment>
<comment type="subcellular location">
    <subcellularLocation>
        <location evidence="3">Cytoplasm</location>
    </subcellularLocation>
</comment>
<comment type="tissue specificity">
    <text evidence="2">Expressed ubiquitously at low levels under normal physiological conditions.</text>
</comment>
<comment type="induction">
    <text evidence="2">Accumulates after heat shock.</text>
</comment>
<comment type="disruption phenotype">
    <text evidence="2">Reduction of OEP7 targeting to plastids.</text>
</comment>
<comment type="similarity">
    <text evidence="1">Belongs to the small heat shock protein (HSP20) family.</text>
</comment>
<evidence type="ECO:0000255" key="1">
    <source>
        <dbReference type="PROSITE-ProRule" id="PRU00285"/>
    </source>
</evidence>
<evidence type="ECO:0000269" key="2">
    <source>
    </source>
</evidence>
<evidence type="ECO:0000305" key="3"/>
<name>HS178_ARATH</name>
<gene>
    <name type="primary">HSP17.8</name>
    <name type="ordered locus">At1g07400</name>
    <name type="ORF">F22G5.25</name>
</gene>